<evidence type="ECO:0000250" key="1"/>
<evidence type="ECO:0000250" key="2">
    <source>
        <dbReference type="UniProtKB" id="Q9LDN0"/>
    </source>
</evidence>
<evidence type="ECO:0000255" key="3"/>
<evidence type="ECO:0000255" key="4">
    <source>
        <dbReference type="PROSITE-ProRule" id="PRU00283"/>
    </source>
</evidence>
<evidence type="ECO:0000256" key="5">
    <source>
        <dbReference type="SAM" id="MobiDB-lite"/>
    </source>
</evidence>
<evidence type="ECO:0000269" key="6">
    <source>
    </source>
</evidence>
<evidence type="ECO:0000303" key="7">
    <source>
    </source>
</evidence>
<evidence type="ECO:0000303" key="8">
    <source>
    </source>
</evidence>
<evidence type="ECO:0000305" key="9"/>
<evidence type="ECO:0000312" key="10">
    <source>
        <dbReference type="Araport" id="AT3G19050"/>
    </source>
</evidence>
<evidence type="ECO:0000312" key="11">
    <source>
        <dbReference type="EMBL" id="ABD62997.1"/>
    </source>
</evidence>
<evidence type="ECO:0000312" key="12">
    <source>
        <dbReference type="EMBL" id="BAB01702.1"/>
    </source>
</evidence>
<protein>
    <recommendedName>
        <fullName evidence="9">Kinesin-like protein KIN-12D</fullName>
    </recommendedName>
    <alternativeName>
        <fullName evidence="8">Phragmoplast orienting kinesin 2</fullName>
    </alternativeName>
</protein>
<name>KN12D_ARATH</name>
<accession>Q27IK6</accession>
<accession>Q9LJ60</accession>
<organism>
    <name type="scientific">Arabidopsis thaliana</name>
    <name type="common">Mouse-ear cress</name>
    <dbReference type="NCBI Taxonomy" id="3702"/>
    <lineage>
        <taxon>Eukaryota</taxon>
        <taxon>Viridiplantae</taxon>
        <taxon>Streptophyta</taxon>
        <taxon>Embryophyta</taxon>
        <taxon>Tracheophyta</taxon>
        <taxon>Spermatophyta</taxon>
        <taxon>Magnoliopsida</taxon>
        <taxon>eudicotyledons</taxon>
        <taxon>Gunneridae</taxon>
        <taxon>Pentapetalae</taxon>
        <taxon>rosids</taxon>
        <taxon>malvids</taxon>
        <taxon>Brassicales</taxon>
        <taxon>Brassicaceae</taxon>
        <taxon>Camelineae</taxon>
        <taxon>Arabidopsis</taxon>
    </lineage>
</organism>
<sequence length="2771" mass="315062">MSKETKLSRRDSDNHDDEIENVPENLRASLLSLTSNDSLKNPKHECGSKIDRTPSKPRAKNPDPALPLRTPDKYRSAAAFSKNRFGWGDKCDSITNTTNAALLNTTPKTGRVVGRAYSETNSTQNTPTKSVSKPPGSCYRGKLDGTGTVRAGGYASLYKGLSSSSGQVSTVVNSVEVPHFSLKEDPSFWMDHNVQILIRVRPLNSMERSINGYNRCLKQESSQCVAWIGPPETRFQFDHVACETIDQETLFRVAGLPMVENCLSGYNSCIFAYGQTGSGKTYTMLGEVGDLEFKPSPNRGMMPRIFEFLFARIQAEEESRRDERLKYNCKCSFLEIYNEQITDLLEPSSTNLQLREDIKSGVYVENLTECEVQSVQDILGLITQGSLNRRVGATNMNRESSRSHSVFTCVIESRWEKDSTANMRFARLNLVDLAGSERQKTSGAEGDRLKEAASINKSLSTLGHVIMVLVDVANGKPRHIPYRDSRLTFLLQDSLGGNSKTMIIANASPSVSCAAETLNTLKFAQRAKLIQNNAVVNEDSNEDVLELRRQIRLLKEELSLLKRQNISRALSFGSATANFAESQVDSPSSVMHETGQQQAGNLLVYESGGCVRMSRKQLKSLEITLAGSLRREHVADASIKKLEAEIEHLNRLVRQREEDTRSTKMMLRFREDKIQRLESLLGNHISADSFLLEENNVLSEEIQLLQAKIDKNPELTRFALENIRLLDQLRRFQEFYEEGEREILLGEVSNLRNQLFQFLDENSDWQKHVDDGIEPQGASRMSKENCSLQEELKKTCYELEKCRSNLGSCLEENAKLSREINDLQAMVSDIRACTPDEHSSVNKQKALLGTQNFEPHETLACEQANYVEEIIKLQLDLDVQKIILDEERTLRGDTEAQAVRLKFDIEVLKDQLLLISKQQKNVYSELGETKSAVAALESQNIILIQEAVELRRIKENYFELLKKQELDIPAMKSKQCDEFKDNPAEDSEIDTKFKKMQASLEKAKRLNMLYKSDIASKACGDEEMDEVCKQAEAATAEVIVCLQNELEVLQKEVNDFQSKENVTEKQVEILETQMEELQDKLRDTTMDNEQLQEQLRGKDMELLIISNEMELLTSELEEILLNGNEGLTDACYQADLISGSLPDKRIWISEQVGGLIRTLSERELMIEDLESCLEDANKKRCDIESMLKSLKGAAIVMNEAHQREFEEKETDVLLLKSQLCTKTETILRLQEKLKMAERLIYEASDCATASLIIVNRYSEVTESHTFELKQKDFQVAESTGTILSLKQQVQDLEATCKEFRSKLLEEEKNASAMEQKLEEIEETSISAMKEKLSELKGGVSDLRSCITMCQEHDKYTEAENSLSSPAHCSEGQEPGRNVVVSSCIEKTPNNNHTESMRLSSKVSSERGKVIILLKQEMESALASLKEVQVEMANLKGEKEELKASEKRSLSNLNDLAAQICNLNTVMSNMEEQYEHKMEVTDHKLKTLEHEIAKMKIEADQEYVENLCILKKFEEAQGTIREADITVNELVIANEKMRFDLEKQKKRGISLVGEKKALVEKLQELESINVKENEKLAYLEKLFESSLMGIGNLVEELATVVRKLQDESSVALTGMAKDLSELKSWVSETNSARLFLEDIWSEIIMKDCAISVLHLCHMGILLETVTGINTENGLLQRGLCVSNSSIAGLRDNNLRLRRELEMFANLKGKLLTDIKNGFERISRNEEATNLLTTKLSSFDQKISGLQYQEDLMLQRSNSMGSQLDILLKEIDLSNGDLAETLLEQERHLNQKNDFFDTEVQLYLMDLCSKDVELLVLAQTAKEYSSCLAVVDRELLDHHVIVEDLKEKLIVSQVEGELKDQCLVDNKLETVSVKEELTEAQSKIKVLSSDLDRSVQKIAEIDEVNKDFGERVIFLESSITGLQQELAMKASELYSLEHSRSVTAEELDIKERDVQVYADIVSSLKKENVSLKNKFIHFGEDQFKALDVTRLSIAKCSHLTEDSKKLEKLTRDGMAISDKMLQLICENVDKASVFADTVQSLQIDVQELLSENLNLHDELLRKDDVLKGLSFDLSLLQESASNSRDKKDETKEIMVHVEALEKTLALKTFELEDAVSHAQMLEVRLQESKEITRNLEVDTEKARKCQEKLSAENKDIRAEAEDLLAEKCSLEEEMIQTKKVSESMEMELFNLRNALGQLNDTVAFTQRKLNDAIDERDNLQDEVLNLKEEFGKMKSEAKEMEARYIEAQQIAESRKTYADEREEEVKLLEGSVEELEYTINVLENKVNVVKDEAERQRLQREELEMELHTIRQQMESARNADEEMKRILDEKHMDLAQAKKHIEALERNTADQKTEITQLSEHISELNLHAEAQASEYMHKFKELEAMAEQVKPEIHVSQAIDSSLSKGSGKPRGSGSPFRCIGLGITQQMRSEKDEELAAARLRIEELETVVSTRQKEIFLLNSKLAKVDSMTHDINRVLLGVKQNVTNCASFLDSQQVLKIAEMLQHNSSDSRERDLEVSHLKQQLNEYNEKRQGWIEEIEGKQTELVTAQIKLEEHRQYQQLLKKENELLKKENFSHKIKVMELEGEVKKLSSHQNPEWRTRDQARIKEENNVLKLQLDELNLKLRRADVSVSRAKEELAFYRASSVKNPHSNFDKTHQLSTKLKETEEDRMQLAQELLSLCTSILKAAGVTGEDFTDINPEVAEEALEQLKTKLGLLESEVHHFRLKGKAKSRRSRNPERKMPSMPSPRRSWSQSPRSMSQVPFFSSLDR</sequence>
<keyword id="KW-0067">ATP-binding</keyword>
<keyword id="KW-0175">Coiled coil</keyword>
<keyword id="KW-0963">Cytoplasm</keyword>
<keyword id="KW-0206">Cytoskeleton</keyword>
<keyword id="KW-0493">Microtubule</keyword>
<keyword id="KW-0505">Motor protein</keyword>
<keyword id="KW-0547">Nucleotide-binding</keyword>
<keyword id="KW-1185">Reference proteome</keyword>
<reference key="1">
    <citation type="journal article" date="2006" name="Curr. Biol.">
        <title>Two kinesins are involved in the spatial control of cytokinesis in Arabidopsis thaliana.</title>
        <authorList>
            <person name="Muller S."/>
            <person name="Han S."/>
            <person name="Smith L.G."/>
        </authorList>
    </citation>
    <scope>NUCLEOTIDE SEQUENCE [MRNA]</scope>
    <scope>TISSUE SPECIFICITY</scope>
    <scope>DISRUPTION PHENOTYPE</scope>
    <scope>FUNCTION</scope>
</reference>
<reference key="2">
    <citation type="journal article" date="2000" name="DNA Res.">
        <title>Structural analysis of Arabidopsis thaliana chromosome 3. II. Sequence features of the 4,251,695 bp regions covered by 90 P1, TAC and BAC clones.</title>
        <authorList>
            <person name="Kaneko T."/>
            <person name="Katoh T."/>
            <person name="Sato S."/>
            <person name="Nakamura Y."/>
            <person name="Asamizu E."/>
            <person name="Tabata S."/>
        </authorList>
    </citation>
    <scope>NUCLEOTIDE SEQUENCE [LARGE SCALE GENOMIC DNA]</scope>
    <source>
        <strain>cv. Columbia</strain>
    </source>
</reference>
<reference key="3">
    <citation type="journal article" date="2017" name="Plant J.">
        <title>Araport11: a complete reannotation of the Arabidopsis thaliana reference genome.</title>
        <authorList>
            <person name="Cheng C.Y."/>
            <person name="Krishnakumar V."/>
            <person name="Chan A.P."/>
            <person name="Thibaud-Nissen F."/>
            <person name="Schobel S."/>
            <person name="Town C.D."/>
        </authorList>
    </citation>
    <scope>GENOME REANNOTATION</scope>
    <source>
        <strain>cv. Columbia</strain>
    </source>
</reference>
<reference key="4">
    <citation type="journal article" date="2001" name="BMC Genomics">
        <title>Kinesins in the Arabidopsis genome: a comparative analysis among eukaryotes.</title>
        <authorList>
            <person name="Reddy A.S."/>
            <person name="Day I.S."/>
        </authorList>
    </citation>
    <scope>GENE FAMILY</scope>
</reference>
<reference key="5">
    <citation type="journal article" date="2006" name="BMC Genomics">
        <title>Comprehensive comparative analysis of kinesins in photosynthetic eukaryotes.</title>
        <authorList>
            <person name="Richardson D.N."/>
            <person name="Simmons M.P."/>
            <person name="Reddy A.S."/>
        </authorList>
    </citation>
    <scope>GENE FAMILY</scope>
    <scope>NOMENCLATURE</scope>
</reference>
<reference key="6">
    <citation type="journal article" date="2006" name="Trends Plant Sci.">
        <title>Mitosis-specific kinesins in Arabidopsis.</title>
        <authorList>
            <person name="Vanstraelen M."/>
            <person name="Inze D."/>
            <person name="Geelen D."/>
        </authorList>
    </citation>
    <scope>REVIEW</scope>
</reference>
<reference key="7">
    <citation type="journal article" date="2012" name="Protoplasma">
        <title>Functions of the Arabidopsis kinesin superfamily of microtubule-based motor proteins.</title>
        <authorList>
            <person name="Zhu C."/>
            <person name="Dixit R."/>
        </authorList>
    </citation>
    <scope>REVIEW</scope>
</reference>
<gene>
    <name evidence="9" type="primary">KIN12D</name>
    <name evidence="11" type="synonym">POK2</name>
    <name evidence="10" type="ordered locus">At3g19050</name>
    <name evidence="12" type="ORF">K13E13.17</name>
</gene>
<feature type="chain" id="PRO_0000000004" description="Kinesin-like protein KIN-12D">
    <location>
        <begin position="1"/>
        <end position="2771"/>
    </location>
</feature>
<feature type="domain" description="Kinesin motor" evidence="4">
    <location>
        <begin position="193"/>
        <end position="530"/>
    </location>
</feature>
<feature type="region of interest" description="Disordered" evidence="5">
    <location>
        <begin position="1"/>
        <end position="73"/>
    </location>
</feature>
<feature type="region of interest" description="Disordered" evidence="5">
    <location>
        <begin position="117"/>
        <end position="139"/>
    </location>
</feature>
<feature type="region of interest" description="Microtubules-binding" evidence="2">
    <location>
        <begin position="400"/>
        <end position="404"/>
    </location>
</feature>
<feature type="region of interest" description="Microtubules-binding" evidence="2">
    <location>
        <begin position="431"/>
        <end position="437"/>
    </location>
</feature>
<feature type="region of interest" description="Microtubules-binding" evidence="2">
    <location>
        <begin position="479"/>
        <end position="483"/>
    </location>
</feature>
<feature type="region of interest" description="Disordered" evidence="5">
    <location>
        <begin position="2727"/>
        <end position="2771"/>
    </location>
</feature>
<feature type="coiled-coil region" evidence="3">
    <location>
        <begin position="1033"/>
        <end position="1110"/>
    </location>
</feature>
<feature type="coiled-coil region" evidence="3">
    <location>
        <begin position="1267"/>
        <end position="1331"/>
    </location>
</feature>
<feature type="coiled-coil region" evidence="3">
    <location>
        <begin position="1410"/>
        <end position="1505"/>
    </location>
</feature>
<feature type="coiled-coil region" evidence="3">
    <location>
        <begin position="2108"/>
        <end position="2390"/>
    </location>
</feature>
<feature type="coiled-coil region" evidence="3">
    <location>
        <begin position="2512"/>
        <end position="2677"/>
    </location>
</feature>
<feature type="compositionally biased region" description="Basic and acidic residues" evidence="5">
    <location>
        <begin position="1"/>
        <end position="13"/>
    </location>
</feature>
<feature type="compositionally biased region" description="Basic and acidic residues" evidence="5">
    <location>
        <begin position="40"/>
        <end position="54"/>
    </location>
</feature>
<feature type="compositionally biased region" description="Polar residues" evidence="5">
    <location>
        <begin position="118"/>
        <end position="131"/>
    </location>
</feature>
<feature type="compositionally biased region" description="Basic residues" evidence="5">
    <location>
        <begin position="2727"/>
        <end position="2736"/>
    </location>
</feature>
<feature type="compositionally biased region" description="Low complexity" evidence="5">
    <location>
        <begin position="2744"/>
        <end position="2762"/>
    </location>
</feature>
<feature type="binding site" evidence="4">
    <location>
        <begin position="274"/>
        <end position="281"/>
    </location>
    <ligand>
        <name>ATP</name>
        <dbReference type="ChEBI" id="CHEBI:30616"/>
    </ligand>
</feature>
<proteinExistence type="evidence at transcript level"/>
<dbReference type="EMBL" id="DQ399530">
    <property type="protein sequence ID" value="ABD62997.1"/>
    <property type="molecule type" value="mRNA"/>
</dbReference>
<dbReference type="EMBL" id="AP000735">
    <property type="protein sequence ID" value="BAB01702.1"/>
    <property type="status" value="ALT_SEQ"/>
    <property type="molecule type" value="Genomic_DNA"/>
</dbReference>
<dbReference type="EMBL" id="CP002686">
    <property type="protein sequence ID" value="AEE76188.1"/>
    <property type="molecule type" value="Genomic_DNA"/>
</dbReference>
<dbReference type="RefSeq" id="NP_188535.4">
    <property type="nucleotide sequence ID" value="NM_112791.6"/>
</dbReference>
<dbReference type="SMR" id="Q27IK6"/>
<dbReference type="BioGRID" id="6772">
    <property type="interactions" value="1"/>
</dbReference>
<dbReference type="FunCoup" id="Q27IK6">
    <property type="interactions" value="539"/>
</dbReference>
<dbReference type="STRING" id="3702.Q27IK6"/>
<dbReference type="iPTMnet" id="Q27IK6"/>
<dbReference type="PaxDb" id="3702-AT3G19050.1"/>
<dbReference type="ProteomicsDB" id="238225"/>
<dbReference type="EnsemblPlants" id="AT3G19050.1">
    <property type="protein sequence ID" value="AT3G19050.1"/>
    <property type="gene ID" value="AT3G19050"/>
</dbReference>
<dbReference type="GeneID" id="821439"/>
<dbReference type="Gramene" id="AT3G19050.1">
    <property type="protein sequence ID" value="AT3G19050.1"/>
    <property type="gene ID" value="AT3G19050"/>
</dbReference>
<dbReference type="KEGG" id="ath:AT3G19050"/>
<dbReference type="Araport" id="AT3G19050"/>
<dbReference type="TAIR" id="AT3G19050">
    <property type="gene designation" value="POK2"/>
</dbReference>
<dbReference type="eggNOG" id="KOG4280">
    <property type="taxonomic scope" value="Eukaryota"/>
</dbReference>
<dbReference type="HOGENOM" id="CLU_000399_0_0_1"/>
<dbReference type="InParanoid" id="Q27IK6"/>
<dbReference type="OMA" id="ENECFSA"/>
<dbReference type="PhylomeDB" id="Q27IK6"/>
<dbReference type="PRO" id="PR:Q27IK6"/>
<dbReference type="Proteomes" id="UP000006548">
    <property type="component" value="Chromosome 3"/>
</dbReference>
<dbReference type="ExpressionAtlas" id="Q27IK6">
    <property type="expression patterns" value="baseline and differential"/>
</dbReference>
<dbReference type="GO" id="GO:0032153">
    <property type="term" value="C:cell division site"/>
    <property type="evidence" value="ECO:0000314"/>
    <property type="project" value="TAIR"/>
</dbReference>
<dbReference type="GO" id="GO:0005874">
    <property type="term" value="C:microtubule"/>
    <property type="evidence" value="ECO:0007669"/>
    <property type="project" value="UniProtKB-KW"/>
</dbReference>
<dbReference type="GO" id="GO:0009524">
    <property type="term" value="C:phragmoplast"/>
    <property type="evidence" value="ECO:0000314"/>
    <property type="project" value="TAIR"/>
</dbReference>
<dbReference type="GO" id="GO:0005524">
    <property type="term" value="F:ATP binding"/>
    <property type="evidence" value="ECO:0007669"/>
    <property type="project" value="UniProtKB-KW"/>
</dbReference>
<dbReference type="GO" id="GO:0008017">
    <property type="term" value="F:microtubule binding"/>
    <property type="evidence" value="ECO:0007669"/>
    <property type="project" value="InterPro"/>
</dbReference>
<dbReference type="GO" id="GO:0003777">
    <property type="term" value="F:microtubule motor activity"/>
    <property type="evidence" value="ECO:0007669"/>
    <property type="project" value="InterPro"/>
</dbReference>
<dbReference type="GO" id="GO:0000911">
    <property type="term" value="P:cytokinesis by cell plate formation"/>
    <property type="evidence" value="ECO:0000315"/>
    <property type="project" value="TAIR"/>
</dbReference>
<dbReference type="GO" id="GO:0007018">
    <property type="term" value="P:microtubule-based movement"/>
    <property type="evidence" value="ECO:0007669"/>
    <property type="project" value="InterPro"/>
</dbReference>
<dbReference type="GO" id="GO:0000281">
    <property type="term" value="P:mitotic cytokinesis"/>
    <property type="evidence" value="ECO:0000315"/>
    <property type="project" value="UniProtKB"/>
</dbReference>
<dbReference type="GO" id="GO:0080175">
    <property type="term" value="P:phragmoplast microtubule organization"/>
    <property type="evidence" value="ECO:0000315"/>
    <property type="project" value="TAIR"/>
</dbReference>
<dbReference type="FunFam" id="3.40.850.10:FF:000033">
    <property type="entry name" value="Kinesin-like protein KIN-12E"/>
    <property type="match status" value="1"/>
</dbReference>
<dbReference type="Gene3D" id="3.40.850.10">
    <property type="entry name" value="Kinesin motor domain"/>
    <property type="match status" value="1"/>
</dbReference>
<dbReference type="InterPro" id="IPR044986">
    <property type="entry name" value="KIF15/KIN-12"/>
</dbReference>
<dbReference type="InterPro" id="IPR019821">
    <property type="entry name" value="Kinesin_motor_CS"/>
</dbReference>
<dbReference type="InterPro" id="IPR001752">
    <property type="entry name" value="Kinesin_motor_dom"/>
</dbReference>
<dbReference type="InterPro" id="IPR036961">
    <property type="entry name" value="Kinesin_motor_dom_sf"/>
</dbReference>
<dbReference type="InterPro" id="IPR027417">
    <property type="entry name" value="P-loop_NTPase"/>
</dbReference>
<dbReference type="PANTHER" id="PTHR37739">
    <property type="entry name" value="KINESIN-LIKE PROTEIN KIN-12D"/>
    <property type="match status" value="1"/>
</dbReference>
<dbReference type="PANTHER" id="PTHR37739:SF8">
    <property type="entry name" value="KINESIN-LIKE PROTEIN KIN-12D"/>
    <property type="match status" value="1"/>
</dbReference>
<dbReference type="Pfam" id="PF00225">
    <property type="entry name" value="Kinesin"/>
    <property type="match status" value="1"/>
</dbReference>
<dbReference type="PRINTS" id="PR00380">
    <property type="entry name" value="KINESINHEAVY"/>
</dbReference>
<dbReference type="SMART" id="SM00129">
    <property type="entry name" value="KISc"/>
    <property type="match status" value="1"/>
</dbReference>
<dbReference type="SUPFAM" id="SSF52540">
    <property type="entry name" value="P-loop containing nucleoside triphosphate hydrolases"/>
    <property type="match status" value="1"/>
</dbReference>
<dbReference type="PROSITE" id="PS00411">
    <property type="entry name" value="KINESIN_MOTOR_1"/>
    <property type="match status" value="1"/>
</dbReference>
<dbReference type="PROSITE" id="PS50067">
    <property type="entry name" value="KINESIN_MOTOR_2"/>
    <property type="match status" value="1"/>
</dbReference>
<comment type="function">
    <text evidence="6">Involved in the spatial control of cytokinesis by a proper phragmoplast guidance.</text>
</comment>
<comment type="subcellular location">
    <subcellularLocation>
        <location evidence="1">Cytoplasm</location>
        <location evidence="1">Cytoskeleton</location>
        <location evidence="1">Phragmoplast</location>
    </subcellularLocation>
</comment>
<comment type="tissue specificity">
    <text evidence="6">Expressed in tissues enriched in dividing cells, such as root meristems, root primordia, and leaf primordia/young leaves.</text>
</comment>
<comment type="disruption phenotype">
    <text evidence="6">No visible phenotype. Pok1 and pok2 double mutant displays smaller cotyledons as well as shorter, wider roots and hypocotyls with adult plants exhibiting a dwarfed stature and producing reduced numbers of seeds.</text>
</comment>
<comment type="similarity">
    <text evidence="7">Belongs to the TRAFAC class myosin-kinesin ATPase superfamily. Kinesin family. KIN-12 subfamily.</text>
</comment>
<comment type="sequence caution" evidence="9">
    <conflict type="erroneous gene model prediction">
        <sequence resource="EMBL-CDS" id="BAB01702"/>
    </conflict>
</comment>